<dbReference type="EMBL" id="U46902">
    <property type="protein sequence ID" value="AAC31628.1"/>
    <property type="molecule type" value="Genomic_DNA"/>
</dbReference>
<dbReference type="EMBL" id="AE014133">
    <property type="protein sequence ID" value="AAN59466.1"/>
    <property type="molecule type" value="Genomic_DNA"/>
</dbReference>
<dbReference type="RefSeq" id="NP_722160.1">
    <property type="nucleotide sequence ID" value="NC_004350.2"/>
</dbReference>
<dbReference type="RefSeq" id="WP_002262659.1">
    <property type="nucleotide sequence ID" value="NC_004350.2"/>
</dbReference>
<dbReference type="SMR" id="Q54430"/>
<dbReference type="STRING" id="210007.SMU_1844"/>
<dbReference type="KEGG" id="smu:SMU_1844"/>
<dbReference type="PATRIC" id="fig|210007.7.peg.1646"/>
<dbReference type="eggNOG" id="COG1609">
    <property type="taxonomic scope" value="Bacteria"/>
</dbReference>
<dbReference type="HOGENOM" id="CLU_037628_6_0_9"/>
<dbReference type="OrthoDB" id="9796186at2"/>
<dbReference type="PhylomeDB" id="Q54430"/>
<dbReference type="Proteomes" id="UP000002512">
    <property type="component" value="Chromosome"/>
</dbReference>
<dbReference type="GO" id="GO:0003700">
    <property type="term" value="F:DNA-binding transcription factor activity"/>
    <property type="evidence" value="ECO:0007669"/>
    <property type="project" value="TreeGrafter"/>
</dbReference>
<dbReference type="GO" id="GO:0000976">
    <property type="term" value="F:transcription cis-regulatory region binding"/>
    <property type="evidence" value="ECO:0007669"/>
    <property type="project" value="TreeGrafter"/>
</dbReference>
<dbReference type="CDD" id="cd01392">
    <property type="entry name" value="HTH_LacI"/>
    <property type="match status" value="1"/>
</dbReference>
<dbReference type="CDD" id="cd06291">
    <property type="entry name" value="PBP1_Qymf-like"/>
    <property type="match status" value="1"/>
</dbReference>
<dbReference type="Gene3D" id="3.40.50.2300">
    <property type="match status" value="2"/>
</dbReference>
<dbReference type="Gene3D" id="1.10.260.40">
    <property type="entry name" value="lambda repressor-like DNA-binding domains"/>
    <property type="match status" value="1"/>
</dbReference>
<dbReference type="InterPro" id="IPR000843">
    <property type="entry name" value="HTH_LacI"/>
</dbReference>
<dbReference type="InterPro" id="IPR046335">
    <property type="entry name" value="LacI/GalR-like_sensor"/>
</dbReference>
<dbReference type="InterPro" id="IPR010982">
    <property type="entry name" value="Lambda_DNA-bd_dom_sf"/>
</dbReference>
<dbReference type="InterPro" id="IPR028082">
    <property type="entry name" value="Peripla_BP_I"/>
</dbReference>
<dbReference type="PANTHER" id="PTHR30146">
    <property type="entry name" value="LACI-RELATED TRANSCRIPTIONAL REPRESSOR"/>
    <property type="match status" value="1"/>
</dbReference>
<dbReference type="PANTHER" id="PTHR30146:SF95">
    <property type="entry name" value="RIBOSE OPERON REPRESSOR"/>
    <property type="match status" value="1"/>
</dbReference>
<dbReference type="Pfam" id="PF00356">
    <property type="entry name" value="LacI"/>
    <property type="match status" value="1"/>
</dbReference>
<dbReference type="Pfam" id="PF13377">
    <property type="entry name" value="Peripla_BP_3"/>
    <property type="match status" value="1"/>
</dbReference>
<dbReference type="PRINTS" id="PR00036">
    <property type="entry name" value="HTHLACI"/>
</dbReference>
<dbReference type="SMART" id="SM00354">
    <property type="entry name" value="HTH_LACI"/>
    <property type="match status" value="1"/>
</dbReference>
<dbReference type="SUPFAM" id="SSF47413">
    <property type="entry name" value="lambda repressor-like DNA-binding domains"/>
    <property type="match status" value="1"/>
</dbReference>
<dbReference type="SUPFAM" id="SSF53822">
    <property type="entry name" value="Periplasmic binding protein-like I"/>
    <property type="match status" value="1"/>
</dbReference>
<dbReference type="PROSITE" id="PS00356">
    <property type="entry name" value="HTH_LACI_1"/>
    <property type="match status" value="1"/>
</dbReference>
<dbReference type="PROSITE" id="PS50932">
    <property type="entry name" value="HTH_LACI_2"/>
    <property type="match status" value="1"/>
</dbReference>
<organism>
    <name type="scientific">Streptococcus mutans serotype c (strain ATCC 700610 / UA159)</name>
    <dbReference type="NCBI Taxonomy" id="210007"/>
    <lineage>
        <taxon>Bacteria</taxon>
        <taxon>Bacillati</taxon>
        <taxon>Bacillota</taxon>
        <taxon>Bacilli</taxon>
        <taxon>Lactobacillales</taxon>
        <taxon>Streptococcaceae</taxon>
        <taxon>Streptococcus</taxon>
    </lineage>
</organism>
<accession>Q54430</accession>
<comment type="function">
    <text>Negative regulator of scrB expression.</text>
</comment>
<feature type="chain" id="PRO_0000108003" description="Sucrose operon repressor">
    <location>
        <begin position="1"/>
        <end position="320"/>
    </location>
</feature>
<feature type="domain" description="HTH lacI-type" evidence="1">
    <location>
        <begin position="1"/>
        <end position="57"/>
    </location>
</feature>
<feature type="DNA-binding region" description="H-T-H motif" evidence="1">
    <location>
        <begin position="5"/>
        <end position="24"/>
    </location>
</feature>
<feature type="sequence conflict" description="In Ref. 1; AAC31628." evidence="2" ref="1">
    <original>G</original>
    <variation>A</variation>
    <location>
        <position position="190"/>
    </location>
</feature>
<feature type="sequence conflict" description="In Ref. 1; AAC31628." evidence="2" ref="1">
    <original>V</original>
    <variation>I</variation>
    <location>
        <position position="294"/>
    </location>
</feature>
<feature type="sequence conflict" description="In Ref. 1; AAC31628." evidence="2" ref="1">
    <original>T</original>
    <variation>I</variation>
    <location>
        <position position="304"/>
    </location>
</feature>
<keyword id="KW-0238">DNA-binding</keyword>
<keyword id="KW-1185">Reference proteome</keyword>
<keyword id="KW-0678">Repressor</keyword>
<keyword id="KW-0804">Transcription</keyword>
<keyword id="KW-0805">Transcription regulation</keyword>
<protein>
    <recommendedName>
        <fullName>Sucrose operon repressor</fullName>
    </recommendedName>
    <alternativeName>
        <fullName>Scr operon regulatory protein</fullName>
    </alternativeName>
</protein>
<gene>
    <name type="primary">scrR</name>
    <name type="ordered locus">SMU_1844</name>
</gene>
<sequence length="320" mass="35626">MVAKLTDVAKLAGVSPTTVSRVINRKGYLSEKTITKVQAAMKTLGYKPNNLARSLQGKSAKLIGLIFPNISHIFYSELIEYLEIELFKHGYKAIICNSQNNPDKERDYLEMLEANQVDGIISSSHNLGIDDYEKVSAPIIAFDRNLAPNIPIVSSDNFEGGRMAAKLLKKHGCQHPIMIAGKDNSNSPTGLRQLGFKSVFAQAPIFHLSGELSIIRKEMEIKVILQNEKPDGIFLSDDMTAILTMKIANQLNITIPHELKIIGYDGTHFVENYYPYLTTIRQPIKDIAHLLVDVLLKKIDHQDTPKDYILPVGLLSGESV</sequence>
<proteinExistence type="predicted"/>
<reference key="1">
    <citation type="journal article" date="1998" name="Infect. Immun.">
        <title>Regulation of sucrose-6-phosphate hydrolase activity in Streptococcus mutans: characterization of the scrR gene.</title>
        <authorList>
            <person name="Hiratsuka K."/>
            <person name="Wang B."/>
            <person name="Sato Y."/>
            <person name="Kuramitsu H.K."/>
        </authorList>
    </citation>
    <scope>NUCLEOTIDE SEQUENCE [GENOMIC DNA]</scope>
    <source>
        <strain>GS-5</strain>
    </source>
</reference>
<reference key="2">
    <citation type="journal article" date="2002" name="Proc. Natl. Acad. Sci. U.S.A.">
        <title>Genome sequence of Streptococcus mutans UA159, a cariogenic dental pathogen.</title>
        <authorList>
            <person name="Ajdic D.J."/>
            <person name="McShan W.M."/>
            <person name="McLaughlin R.E."/>
            <person name="Savic G."/>
            <person name="Chang J."/>
            <person name="Carson M.B."/>
            <person name="Primeaux C."/>
            <person name="Tian R."/>
            <person name="Kenton S."/>
            <person name="Jia H.G."/>
            <person name="Lin S.P."/>
            <person name="Qian Y."/>
            <person name="Li S."/>
            <person name="Zhu H."/>
            <person name="Najar F.Z."/>
            <person name="Lai H."/>
            <person name="White J."/>
            <person name="Roe B.A."/>
            <person name="Ferretti J.J."/>
        </authorList>
    </citation>
    <scope>NUCLEOTIDE SEQUENCE [LARGE SCALE GENOMIC DNA]</scope>
    <source>
        <strain>ATCC 700610 / UA159</strain>
    </source>
</reference>
<name>SCRR_STRMU</name>
<evidence type="ECO:0000255" key="1">
    <source>
        <dbReference type="PROSITE-ProRule" id="PRU00111"/>
    </source>
</evidence>
<evidence type="ECO:0000305" key="2"/>